<dbReference type="EC" id="2.7.2.11" evidence="1"/>
<dbReference type="EMBL" id="BA000035">
    <property type="protein sequence ID" value="BAC19075.1"/>
    <property type="status" value="ALT_INIT"/>
    <property type="molecule type" value="Genomic_DNA"/>
</dbReference>
<dbReference type="RefSeq" id="WP_143758542.1">
    <property type="nucleotide sequence ID" value="NC_004369.1"/>
</dbReference>
<dbReference type="SMR" id="Q8FN82"/>
<dbReference type="STRING" id="196164.gene:10742696"/>
<dbReference type="KEGG" id="cef:CE2265"/>
<dbReference type="eggNOG" id="COG0263">
    <property type="taxonomic scope" value="Bacteria"/>
</dbReference>
<dbReference type="HOGENOM" id="CLU_025400_2_0_11"/>
<dbReference type="OrthoDB" id="9804434at2"/>
<dbReference type="UniPathway" id="UPA00098">
    <property type="reaction ID" value="UER00359"/>
</dbReference>
<dbReference type="Proteomes" id="UP000001409">
    <property type="component" value="Chromosome"/>
</dbReference>
<dbReference type="GO" id="GO:0005829">
    <property type="term" value="C:cytosol"/>
    <property type="evidence" value="ECO:0007669"/>
    <property type="project" value="TreeGrafter"/>
</dbReference>
<dbReference type="GO" id="GO:0005524">
    <property type="term" value="F:ATP binding"/>
    <property type="evidence" value="ECO:0007669"/>
    <property type="project" value="UniProtKB-KW"/>
</dbReference>
<dbReference type="GO" id="GO:0004349">
    <property type="term" value="F:glutamate 5-kinase activity"/>
    <property type="evidence" value="ECO:0007669"/>
    <property type="project" value="UniProtKB-UniRule"/>
</dbReference>
<dbReference type="GO" id="GO:0003723">
    <property type="term" value="F:RNA binding"/>
    <property type="evidence" value="ECO:0007669"/>
    <property type="project" value="InterPro"/>
</dbReference>
<dbReference type="GO" id="GO:0055129">
    <property type="term" value="P:L-proline biosynthetic process"/>
    <property type="evidence" value="ECO:0007669"/>
    <property type="project" value="UniProtKB-UniRule"/>
</dbReference>
<dbReference type="CDD" id="cd04242">
    <property type="entry name" value="AAK_G5K_ProB"/>
    <property type="match status" value="1"/>
</dbReference>
<dbReference type="CDD" id="cd21157">
    <property type="entry name" value="PUA_G5K"/>
    <property type="match status" value="1"/>
</dbReference>
<dbReference type="FunFam" id="3.40.1160.10:FF:000018">
    <property type="entry name" value="Glutamate 5-kinase"/>
    <property type="match status" value="1"/>
</dbReference>
<dbReference type="Gene3D" id="3.40.1160.10">
    <property type="entry name" value="Acetylglutamate kinase-like"/>
    <property type="match status" value="1"/>
</dbReference>
<dbReference type="Gene3D" id="2.30.130.10">
    <property type="entry name" value="PUA domain"/>
    <property type="match status" value="1"/>
</dbReference>
<dbReference type="HAMAP" id="MF_00456">
    <property type="entry name" value="ProB"/>
    <property type="match status" value="1"/>
</dbReference>
<dbReference type="InterPro" id="IPR036393">
    <property type="entry name" value="AceGlu_kinase-like_sf"/>
</dbReference>
<dbReference type="InterPro" id="IPR001048">
    <property type="entry name" value="Asp/Glu/Uridylate_kinase"/>
</dbReference>
<dbReference type="InterPro" id="IPR041739">
    <property type="entry name" value="G5K_ProB"/>
</dbReference>
<dbReference type="InterPro" id="IPR001057">
    <property type="entry name" value="Glu/AcGlu_kinase"/>
</dbReference>
<dbReference type="InterPro" id="IPR011529">
    <property type="entry name" value="Glu_5kinase"/>
</dbReference>
<dbReference type="InterPro" id="IPR005715">
    <property type="entry name" value="Glu_5kinase/COase_Synthase"/>
</dbReference>
<dbReference type="InterPro" id="IPR019797">
    <property type="entry name" value="Glutamate_5-kinase_CS"/>
</dbReference>
<dbReference type="InterPro" id="IPR002478">
    <property type="entry name" value="PUA"/>
</dbReference>
<dbReference type="InterPro" id="IPR015947">
    <property type="entry name" value="PUA-like_sf"/>
</dbReference>
<dbReference type="InterPro" id="IPR036974">
    <property type="entry name" value="PUA_sf"/>
</dbReference>
<dbReference type="NCBIfam" id="TIGR01027">
    <property type="entry name" value="proB"/>
    <property type="match status" value="1"/>
</dbReference>
<dbReference type="PANTHER" id="PTHR43654">
    <property type="entry name" value="GLUTAMATE 5-KINASE"/>
    <property type="match status" value="1"/>
</dbReference>
<dbReference type="PANTHER" id="PTHR43654:SF1">
    <property type="entry name" value="ISOPENTENYL PHOSPHATE KINASE"/>
    <property type="match status" value="1"/>
</dbReference>
<dbReference type="Pfam" id="PF00696">
    <property type="entry name" value="AA_kinase"/>
    <property type="match status" value="1"/>
</dbReference>
<dbReference type="Pfam" id="PF01472">
    <property type="entry name" value="PUA"/>
    <property type="match status" value="1"/>
</dbReference>
<dbReference type="PIRSF" id="PIRSF000729">
    <property type="entry name" value="GK"/>
    <property type="match status" value="1"/>
</dbReference>
<dbReference type="PRINTS" id="PR00474">
    <property type="entry name" value="GLU5KINASE"/>
</dbReference>
<dbReference type="SMART" id="SM00359">
    <property type="entry name" value="PUA"/>
    <property type="match status" value="1"/>
</dbReference>
<dbReference type="SUPFAM" id="SSF53633">
    <property type="entry name" value="Carbamate kinase-like"/>
    <property type="match status" value="1"/>
</dbReference>
<dbReference type="SUPFAM" id="SSF88697">
    <property type="entry name" value="PUA domain-like"/>
    <property type="match status" value="1"/>
</dbReference>
<dbReference type="PROSITE" id="PS00902">
    <property type="entry name" value="GLUTAMATE_5_KINASE"/>
    <property type="match status" value="1"/>
</dbReference>
<dbReference type="PROSITE" id="PS50890">
    <property type="entry name" value="PUA"/>
    <property type="match status" value="1"/>
</dbReference>
<keyword id="KW-0028">Amino-acid biosynthesis</keyword>
<keyword id="KW-0067">ATP-binding</keyword>
<keyword id="KW-0963">Cytoplasm</keyword>
<keyword id="KW-0418">Kinase</keyword>
<keyword id="KW-0547">Nucleotide-binding</keyword>
<keyword id="KW-0641">Proline biosynthesis</keyword>
<keyword id="KW-1185">Reference proteome</keyword>
<keyword id="KW-0808">Transferase</keyword>
<feature type="chain" id="PRO_0000109664" description="Glutamate 5-kinase">
    <location>
        <begin position="1"/>
        <end position="369"/>
    </location>
</feature>
<feature type="domain" description="PUA" evidence="1">
    <location>
        <begin position="277"/>
        <end position="351"/>
    </location>
</feature>
<feature type="binding site" evidence="1">
    <location>
        <position position="14"/>
    </location>
    <ligand>
        <name>ATP</name>
        <dbReference type="ChEBI" id="CHEBI:30616"/>
    </ligand>
</feature>
<feature type="binding site" evidence="1">
    <location>
        <position position="56"/>
    </location>
    <ligand>
        <name>substrate</name>
    </ligand>
</feature>
<feature type="binding site" evidence="1">
    <location>
        <position position="143"/>
    </location>
    <ligand>
        <name>substrate</name>
    </ligand>
</feature>
<feature type="binding site" evidence="1">
    <location>
        <position position="155"/>
    </location>
    <ligand>
        <name>substrate</name>
    </ligand>
</feature>
<feature type="binding site" evidence="1">
    <location>
        <begin position="175"/>
        <end position="176"/>
    </location>
    <ligand>
        <name>ATP</name>
        <dbReference type="ChEBI" id="CHEBI:30616"/>
    </ligand>
</feature>
<feature type="binding site" evidence="1">
    <location>
        <begin position="215"/>
        <end position="221"/>
    </location>
    <ligand>
        <name>ATP</name>
        <dbReference type="ChEBI" id="CHEBI:30616"/>
    </ligand>
</feature>
<gene>
    <name evidence="1" type="primary">proB</name>
    <name type="ordered locus">CE2265</name>
</gene>
<protein>
    <recommendedName>
        <fullName evidence="1">Glutamate 5-kinase</fullName>
        <ecNumber evidence="1">2.7.2.11</ecNumber>
    </recommendedName>
    <alternativeName>
        <fullName evidence="1">Gamma-glutamyl kinase</fullName>
        <shortName evidence="1">GK</shortName>
    </alternativeName>
</protein>
<proteinExistence type="inferred from homology"/>
<organism>
    <name type="scientific">Corynebacterium efficiens (strain DSM 44549 / YS-314 / AJ 12310 / JCM 11189 / NBRC 100395)</name>
    <dbReference type="NCBI Taxonomy" id="196164"/>
    <lineage>
        <taxon>Bacteria</taxon>
        <taxon>Bacillati</taxon>
        <taxon>Actinomycetota</taxon>
        <taxon>Actinomycetes</taxon>
        <taxon>Mycobacteriales</taxon>
        <taxon>Corynebacteriaceae</taxon>
        <taxon>Corynebacterium</taxon>
    </lineage>
</organism>
<accession>Q8FN82</accession>
<sequence>MRERIATAKRVVVKIGSSSLTSDEGGHTVDPNRINTIVNALQARMEAGSDVIVVSSGSVAAGMAPLGLTTRPTDLSMKQAAAAVGQVHLMHQWGRSFARYGRPVGQVLLTAGDAGQRDRARNAQRTIDRLRMLGVIPIVNENDTVATTGVNFGDNDRLAAIVSHLVSADALVLLSDVDGLFDKNPADPTARFISEVRDGNDLKGVLAGDGGKVGTGGMASKVSAARLASRSGVPVLLTSAANIGPALEHAQVGTVFHPKENRLSAWKFWALYAADTAGKIRLDQGATEAVTSGGKSLLAVGITEVIGDFRAGEIVEILGPNGEIIGRGEVNYDSETLMPMLGMKTQELPDDMQRPVVHADYLSNYASRA</sequence>
<name>PROB_COREF</name>
<reference key="1">
    <citation type="journal article" date="2003" name="Genome Res.">
        <title>Comparative complete genome sequence analysis of the amino acid replacements responsible for the thermostability of Corynebacterium efficiens.</title>
        <authorList>
            <person name="Nishio Y."/>
            <person name="Nakamura Y."/>
            <person name="Kawarabayasi Y."/>
            <person name="Usuda Y."/>
            <person name="Kimura E."/>
            <person name="Sugimoto S."/>
            <person name="Matsui K."/>
            <person name="Yamagishi A."/>
            <person name="Kikuchi H."/>
            <person name="Ikeo K."/>
            <person name="Gojobori T."/>
        </authorList>
    </citation>
    <scope>NUCLEOTIDE SEQUENCE [LARGE SCALE GENOMIC DNA]</scope>
    <source>
        <strain>DSM 44549 / YS-314 / AJ 12310 / JCM 11189 / NBRC 100395</strain>
    </source>
</reference>
<evidence type="ECO:0000255" key="1">
    <source>
        <dbReference type="HAMAP-Rule" id="MF_00456"/>
    </source>
</evidence>
<evidence type="ECO:0000305" key="2"/>
<comment type="function">
    <text evidence="1">Catalyzes the transfer of a phosphate group to glutamate to form L-glutamate 5-phosphate.</text>
</comment>
<comment type="catalytic activity">
    <reaction evidence="1">
        <text>L-glutamate + ATP = L-glutamyl 5-phosphate + ADP</text>
        <dbReference type="Rhea" id="RHEA:14877"/>
        <dbReference type="ChEBI" id="CHEBI:29985"/>
        <dbReference type="ChEBI" id="CHEBI:30616"/>
        <dbReference type="ChEBI" id="CHEBI:58274"/>
        <dbReference type="ChEBI" id="CHEBI:456216"/>
        <dbReference type="EC" id="2.7.2.11"/>
    </reaction>
</comment>
<comment type="pathway">
    <text evidence="1">Amino-acid biosynthesis; L-proline biosynthesis; L-glutamate 5-semialdehyde from L-glutamate: step 1/2.</text>
</comment>
<comment type="subcellular location">
    <subcellularLocation>
        <location evidence="1">Cytoplasm</location>
    </subcellularLocation>
</comment>
<comment type="similarity">
    <text evidence="1">Belongs to the glutamate 5-kinase family.</text>
</comment>
<comment type="sequence caution" evidence="2">
    <conflict type="erroneous initiation">
        <sequence resource="EMBL-CDS" id="BAC19075"/>
    </conflict>
</comment>